<keyword id="KW-0687">Ribonucleoprotein</keyword>
<keyword id="KW-0689">Ribosomal protein</keyword>
<keyword id="KW-0694">RNA-binding</keyword>
<keyword id="KW-0699">rRNA-binding</keyword>
<evidence type="ECO:0000255" key="1">
    <source>
        <dbReference type="HAMAP-Rule" id="MF_01345"/>
    </source>
</evidence>
<evidence type="ECO:0000305" key="2"/>
<gene>
    <name evidence="1" type="primary">rpsQ</name>
    <name type="ordered locus">BMASAVP1_A3160</name>
</gene>
<accession>A1V894</accession>
<comment type="function">
    <text evidence="1">One of the primary rRNA binding proteins, it binds specifically to the 5'-end of 16S ribosomal RNA.</text>
</comment>
<comment type="subunit">
    <text evidence="1">Part of the 30S ribosomal subunit.</text>
</comment>
<comment type="similarity">
    <text evidence="1">Belongs to the universal ribosomal protein uS17 family.</text>
</comment>
<organism>
    <name type="scientific">Burkholderia mallei (strain SAVP1)</name>
    <dbReference type="NCBI Taxonomy" id="320388"/>
    <lineage>
        <taxon>Bacteria</taxon>
        <taxon>Pseudomonadati</taxon>
        <taxon>Pseudomonadota</taxon>
        <taxon>Betaproteobacteria</taxon>
        <taxon>Burkholderiales</taxon>
        <taxon>Burkholderiaceae</taxon>
        <taxon>Burkholderia</taxon>
        <taxon>pseudomallei group</taxon>
    </lineage>
</organism>
<proteinExistence type="inferred from homology"/>
<sequence length="90" mass="10249">MNDSVKTSLKRTLVGKVVSNKMDKTVTVLVEHRVKHPIYGKYVVRSKKYHAHDEANTYNEGDLVEIQETRPVSKTKAWAVSRLVEAARVI</sequence>
<protein>
    <recommendedName>
        <fullName evidence="1">Small ribosomal subunit protein uS17</fullName>
    </recommendedName>
    <alternativeName>
        <fullName evidence="2">30S ribosomal protein S17</fullName>
    </alternativeName>
</protein>
<feature type="chain" id="PRO_1000054927" description="Small ribosomal subunit protein uS17">
    <location>
        <begin position="1"/>
        <end position="90"/>
    </location>
</feature>
<reference key="1">
    <citation type="journal article" date="2010" name="Genome Biol. Evol.">
        <title>Continuing evolution of Burkholderia mallei through genome reduction and large-scale rearrangements.</title>
        <authorList>
            <person name="Losada L."/>
            <person name="Ronning C.M."/>
            <person name="DeShazer D."/>
            <person name="Woods D."/>
            <person name="Fedorova N."/>
            <person name="Kim H.S."/>
            <person name="Shabalina S.A."/>
            <person name="Pearson T.R."/>
            <person name="Brinkac L."/>
            <person name="Tan P."/>
            <person name="Nandi T."/>
            <person name="Crabtree J."/>
            <person name="Badger J."/>
            <person name="Beckstrom-Sternberg S."/>
            <person name="Saqib M."/>
            <person name="Schutzer S.E."/>
            <person name="Keim P."/>
            <person name="Nierman W.C."/>
        </authorList>
    </citation>
    <scope>NUCLEOTIDE SEQUENCE [LARGE SCALE GENOMIC DNA]</scope>
    <source>
        <strain>SAVP1</strain>
    </source>
</reference>
<dbReference type="EMBL" id="CP000526">
    <property type="protein sequence ID" value="ABM52556.1"/>
    <property type="molecule type" value="Genomic_DNA"/>
</dbReference>
<dbReference type="RefSeq" id="WP_004201274.1">
    <property type="nucleotide sequence ID" value="NC_008785.1"/>
</dbReference>
<dbReference type="SMR" id="A1V894"/>
<dbReference type="GeneID" id="93061823"/>
<dbReference type="KEGG" id="bmv:BMASAVP1_A3160"/>
<dbReference type="HOGENOM" id="CLU_073626_1_1_4"/>
<dbReference type="GO" id="GO:0022627">
    <property type="term" value="C:cytosolic small ribosomal subunit"/>
    <property type="evidence" value="ECO:0007669"/>
    <property type="project" value="TreeGrafter"/>
</dbReference>
<dbReference type="GO" id="GO:0019843">
    <property type="term" value="F:rRNA binding"/>
    <property type="evidence" value="ECO:0007669"/>
    <property type="project" value="UniProtKB-UniRule"/>
</dbReference>
<dbReference type="GO" id="GO:0003735">
    <property type="term" value="F:structural constituent of ribosome"/>
    <property type="evidence" value="ECO:0007669"/>
    <property type="project" value="InterPro"/>
</dbReference>
<dbReference type="GO" id="GO:0006412">
    <property type="term" value="P:translation"/>
    <property type="evidence" value="ECO:0007669"/>
    <property type="project" value="UniProtKB-UniRule"/>
</dbReference>
<dbReference type="CDD" id="cd00364">
    <property type="entry name" value="Ribosomal_uS17"/>
    <property type="match status" value="1"/>
</dbReference>
<dbReference type="Gene3D" id="2.40.50.140">
    <property type="entry name" value="Nucleic acid-binding proteins"/>
    <property type="match status" value="1"/>
</dbReference>
<dbReference type="HAMAP" id="MF_01345_B">
    <property type="entry name" value="Ribosomal_uS17_B"/>
    <property type="match status" value="1"/>
</dbReference>
<dbReference type="InterPro" id="IPR012340">
    <property type="entry name" value="NA-bd_OB-fold"/>
</dbReference>
<dbReference type="InterPro" id="IPR000266">
    <property type="entry name" value="Ribosomal_uS17"/>
</dbReference>
<dbReference type="InterPro" id="IPR019984">
    <property type="entry name" value="Ribosomal_uS17_bact/chlr"/>
</dbReference>
<dbReference type="InterPro" id="IPR019979">
    <property type="entry name" value="Ribosomal_uS17_CS"/>
</dbReference>
<dbReference type="NCBIfam" id="NF004123">
    <property type="entry name" value="PRK05610.1"/>
    <property type="match status" value="1"/>
</dbReference>
<dbReference type="NCBIfam" id="TIGR03635">
    <property type="entry name" value="uS17_bact"/>
    <property type="match status" value="1"/>
</dbReference>
<dbReference type="PANTHER" id="PTHR10744">
    <property type="entry name" value="40S RIBOSOMAL PROTEIN S11 FAMILY MEMBER"/>
    <property type="match status" value="1"/>
</dbReference>
<dbReference type="PANTHER" id="PTHR10744:SF1">
    <property type="entry name" value="SMALL RIBOSOMAL SUBUNIT PROTEIN US17M"/>
    <property type="match status" value="1"/>
</dbReference>
<dbReference type="Pfam" id="PF00366">
    <property type="entry name" value="Ribosomal_S17"/>
    <property type="match status" value="1"/>
</dbReference>
<dbReference type="PRINTS" id="PR00973">
    <property type="entry name" value="RIBOSOMALS17"/>
</dbReference>
<dbReference type="SUPFAM" id="SSF50249">
    <property type="entry name" value="Nucleic acid-binding proteins"/>
    <property type="match status" value="1"/>
</dbReference>
<dbReference type="PROSITE" id="PS00056">
    <property type="entry name" value="RIBOSOMAL_S17"/>
    <property type="match status" value="1"/>
</dbReference>
<name>RS17_BURMS</name>